<keyword id="KW-0028">Amino-acid biosynthesis</keyword>
<keyword id="KW-0067">ATP-binding</keyword>
<keyword id="KW-0963">Cytoplasm</keyword>
<keyword id="KW-0368">Histidine biosynthesis</keyword>
<keyword id="KW-0378">Hydrolase</keyword>
<keyword id="KW-0547">Nucleotide-binding</keyword>
<protein>
    <recommendedName>
        <fullName>Phosphoribosyl-ATP pyrophosphatase</fullName>
        <shortName>PRA-PH</shortName>
        <ecNumber>3.6.1.31</ecNumber>
    </recommendedName>
</protein>
<name>HIS2_RHILO</name>
<dbReference type="EC" id="3.6.1.31"/>
<dbReference type="EMBL" id="BA000012">
    <property type="protein sequence ID" value="BAB51541.1"/>
    <property type="molecule type" value="Genomic_DNA"/>
</dbReference>
<dbReference type="RefSeq" id="WP_010912882.1">
    <property type="nucleotide sequence ID" value="NC_002678.2"/>
</dbReference>
<dbReference type="SMR" id="Q98CT0"/>
<dbReference type="KEGG" id="mlo:mlr5018"/>
<dbReference type="PATRIC" id="fig|266835.9.peg.3961"/>
<dbReference type="eggNOG" id="COG0140">
    <property type="taxonomic scope" value="Bacteria"/>
</dbReference>
<dbReference type="HOGENOM" id="CLU_123337_1_1_5"/>
<dbReference type="UniPathway" id="UPA00031">
    <property type="reaction ID" value="UER00007"/>
</dbReference>
<dbReference type="Proteomes" id="UP000000552">
    <property type="component" value="Chromosome"/>
</dbReference>
<dbReference type="GO" id="GO:0005737">
    <property type="term" value="C:cytoplasm"/>
    <property type="evidence" value="ECO:0007669"/>
    <property type="project" value="UniProtKB-SubCell"/>
</dbReference>
<dbReference type="GO" id="GO:0005524">
    <property type="term" value="F:ATP binding"/>
    <property type="evidence" value="ECO:0007669"/>
    <property type="project" value="UniProtKB-KW"/>
</dbReference>
<dbReference type="GO" id="GO:0004636">
    <property type="term" value="F:phosphoribosyl-ATP diphosphatase activity"/>
    <property type="evidence" value="ECO:0007669"/>
    <property type="project" value="UniProtKB-UniRule"/>
</dbReference>
<dbReference type="GO" id="GO:0000105">
    <property type="term" value="P:L-histidine biosynthetic process"/>
    <property type="evidence" value="ECO:0007669"/>
    <property type="project" value="UniProtKB-UniRule"/>
</dbReference>
<dbReference type="CDD" id="cd11534">
    <property type="entry name" value="NTP-PPase_HisIE_like"/>
    <property type="match status" value="1"/>
</dbReference>
<dbReference type="Gene3D" id="1.10.287.1080">
    <property type="entry name" value="MazG-like"/>
    <property type="match status" value="1"/>
</dbReference>
<dbReference type="HAMAP" id="MF_01020">
    <property type="entry name" value="HisE"/>
    <property type="match status" value="1"/>
</dbReference>
<dbReference type="InterPro" id="IPR008179">
    <property type="entry name" value="HisE"/>
</dbReference>
<dbReference type="InterPro" id="IPR021130">
    <property type="entry name" value="PRib-ATP_PPHydrolase-like"/>
</dbReference>
<dbReference type="NCBIfam" id="TIGR03188">
    <property type="entry name" value="histidine_hisI"/>
    <property type="match status" value="1"/>
</dbReference>
<dbReference type="NCBIfam" id="NF001613">
    <property type="entry name" value="PRK00400.1-5"/>
    <property type="match status" value="1"/>
</dbReference>
<dbReference type="PANTHER" id="PTHR42945">
    <property type="entry name" value="HISTIDINE BIOSYNTHESIS BIFUNCTIONAL PROTEIN"/>
    <property type="match status" value="1"/>
</dbReference>
<dbReference type="PANTHER" id="PTHR42945:SF1">
    <property type="entry name" value="HISTIDINE BIOSYNTHESIS BIFUNCTIONAL PROTEIN HIS7"/>
    <property type="match status" value="1"/>
</dbReference>
<dbReference type="Pfam" id="PF01503">
    <property type="entry name" value="PRA-PH"/>
    <property type="match status" value="1"/>
</dbReference>
<dbReference type="SUPFAM" id="SSF101386">
    <property type="entry name" value="all-alpha NTP pyrophosphatases"/>
    <property type="match status" value="1"/>
</dbReference>
<sequence>MAEFSFSDLEAIIRDRAHSGDPDSWTAKLFARGIDKAAQKLGEEAVETAIAAVKGDRQGLVSESADLIYHWLVVLGLSGVPLSDVLKELESRTGRSGIAEKASRPKG</sequence>
<gene>
    <name type="primary">hisE</name>
    <name type="ordered locus">mlr5018</name>
</gene>
<reference key="1">
    <citation type="journal article" date="2000" name="DNA Res.">
        <title>Complete genome structure of the nitrogen-fixing symbiotic bacterium Mesorhizobium loti.</title>
        <authorList>
            <person name="Kaneko T."/>
            <person name="Nakamura Y."/>
            <person name="Sato S."/>
            <person name="Asamizu E."/>
            <person name="Kato T."/>
            <person name="Sasamoto S."/>
            <person name="Watanabe A."/>
            <person name="Idesawa K."/>
            <person name="Ishikawa A."/>
            <person name="Kawashima K."/>
            <person name="Kimura T."/>
            <person name="Kishida Y."/>
            <person name="Kiyokawa C."/>
            <person name="Kohara M."/>
            <person name="Matsumoto M."/>
            <person name="Matsuno A."/>
            <person name="Mochizuki Y."/>
            <person name="Nakayama S."/>
            <person name="Nakazaki N."/>
            <person name="Shimpo S."/>
            <person name="Sugimoto M."/>
            <person name="Takeuchi C."/>
            <person name="Yamada M."/>
            <person name="Tabata S."/>
        </authorList>
    </citation>
    <scope>NUCLEOTIDE SEQUENCE [LARGE SCALE GENOMIC DNA]</scope>
    <source>
        <strain>LMG 29417 / CECT 9101 / MAFF 303099</strain>
    </source>
</reference>
<evidence type="ECO:0000250" key="1"/>
<evidence type="ECO:0000305" key="2"/>
<proteinExistence type="inferred from homology"/>
<organism>
    <name type="scientific">Mesorhizobium japonicum (strain LMG 29417 / CECT 9101 / MAFF 303099)</name>
    <name type="common">Mesorhizobium loti (strain MAFF 303099)</name>
    <dbReference type="NCBI Taxonomy" id="266835"/>
    <lineage>
        <taxon>Bacteria</taxon>
        <taxon>Pseudomonadati</taxon>
        <taxon>Pseudomonadota</taxon>
        <taxon>Alphaproteobacteria</taxon>
        <taxon>Hyphomicrobiales</taxon>
        <taxon>Phyllobacteriaceae</taxon>
        <taxon>Mesorhizobium</taxon>
    </lineage>
</organism>
<accession>Q98CT0</accession>
<comment type="catalytic activity">
    <reaction>
        <text>1-(5-phospho-beta-D-ribosyl)-ATP + H2O = 1-(5-phospho-beta-D-ribosyl)-5'-AMP + diphosphate + H(+)</text>
        <dbReference type="Rhea" id="RHEA:22828"/>
        <dbReference type="ChEBI" id="CHEBI:15377"/>
        <dbReference type="ChEBI" id="CHEBI:15378"/>
        <dbReference type="ChEBI" id="CHEBI:33019"/>
        <dbReference type="ChEBI" id="CHEBI:59457"/>
        <dbReference type="ChEBI" id="CHEBI:73183"/>
        <dbReference type="EC" id="3.6.1.31"/>
    </reaction>
</comment>
<comment type="pathway">
    <text>Amino-acid biosynthesis; L-histidine biosynthesis; L-histidine from 5-phospho-alpha-D-ribose 1-diphosphate: step 2/9.</text>
</comment>
<comment type="subcellular location">
    <subcellularLocation>
        <location evidence="1">Cytoplasm</location>
    </subcellularLocation>
</comment>
<comment type="similarity">
    <text evidence="2">Belongs to the PRA-PH family.</text>
</comment>
<feature type="chain" id="PRO_0000136380" description="Phosphoribosyl-ATP pyrophosphatase">
    <location>
        <begin position="1"/>
        <end position="107"/>
    </location>
</feature>